<feature type="initiator methionine" description="Removed" evidence="2">
    <location>
        <position position="1"/>
    </location>
</feature>
<feature type="chain" id="PRO_0000006453" description="N-acetylmuramoyl-L-alanine amidase CwlA">
    <location>
        <begin position="2"/>
        <end position="272"/>
    </location>
</feature>
<feature type="domain" description="N-acetylmuramoyl-L-alanine amidase" evidence="1">
    <location>
        <begin position="24"/>
        <end position="142"/>
    </location>
</feature>
<protein>
    <recommendedName>
        <fullName>N-acetylmuramoyl-L-alanine amidase CwlA</fullName>
        <ecNumber>3.5.1.28</ecNumber>
    </recommendedName>
    <alternativeName>
        <fullName>Autolysin</fullName>
    </alternativeName>
    <alternativeName>
        <fullName>Cell wall hydrolase</fullName>
    </alternativeName>
</protein>
<reference key="1">
    <citation type="journal article" date="1990" name="J. Gen. Microbiol.">
        <title>Cloning, sequencing and genetic mapping of a Bacillus subtilis cell wall hydrolase gene.</title>
        <authorList>
            <person name="Kuroda A."/>
            <person name="Sekiguchi J."/>
        </authorList>
    </citation>
    <scope>NUCLEOTIDE SEQUENCE [GENOMIC DNA]</scope>
    <scope>PROTEIN SEQUENCE OF 2-21</scope>
    <source>
        <strain>168</strain>
    </source>
</reference>
<reference key="2">
    <citation type="journal article" date="1991" name="J. Gen. Microbiol.">
        <title>Cloning, expression, sequence analysis and biochemical characterization of an autolytic amidase of Bacillus subtilis 168 trpC2.</title>
        <authorList>
            <person name="Foster S.J."/>
        </authorList>
    </citation>
    <scope>NUCLEOTIDE SEQUENCE [GENOMIC DNA]</scope>
    <source>
        <strain>168</strain>
    </source>
</reference>
<reference key="3">
    <citation type="journal article" date="1995" name="Microbiology">
        <title>Complete nucleotide sequence of a skin element excised by DNA rearrangement during sporulation in Bacillus subtilis.</title>
        <authorList>
            <person name="Takemaru K."/>
            <person name="Mizuno M."/>
            <person name="Sato T."/>
            <person name="Takeuchi M."/>
            <person name="Kobayashi Y."/>
        </authorList>
    </citation>
    <scope>NUCLEOTIDE SEQUENCE [GENOMIC DNA]</scope>
    <source>
        <strain>168 / JH642</strain>
    </source>
</reference>
<reference key="4">
    <citation type="journal article" date="1996" name="Microbiology">
        <title>Systematic sequencing of the 283 kb 210 degrees-232 degrees region of the Bacillus subtilis genome containing the skin element and many sporulation genes.</title>
        <authorList>
            <person name="Mizuno M."/>
            <person name="Masuda S."/>
            <person name="Takemaru K."/>
            <person name="Hosono S."/>
            <person name="Sato T."/>
            <person name="Takeuchi M."/>
            <person name="Kobayashi Y."/>
        </authorList>
    </citation>
    <scope>NUCLEOTIDE SEQUENCE [GENOMIC DNA]</scope>
    <source>
        <strain>168 / JH642</strain>
    </source>
</reference>
<reference key="5">
    <citation type="journal article" date="1997" name="Nature">
        <title>The complete genome sequence of the Gram-positive bacterium Bacillus subtilis.</title>
        <authorList>
            <person name="Kunst F."/>
            <person name="Ogasawara N."/>
            <person name="Moszer I."/>
            <person name="Albertini A.M."/>
            <person name="Alloni G."/>
            <person name="Azevedo V."/>
            <person name="Bertero M.G."/>
            <person name="Bessieres P."/>
            <person name="Bolotin A."/>
            <person name="Borchert S."/>
            <person name="Borriss R."/>
            <person name="Boursier L."/>
            <person name="Brans A."/>
            <person name="Braun M."/>
            <person name="Brignell S.C."/>
            <person name="Bron S."/>
            <person name="Brouillet S."/>
            <person name="Bruschi C.V."/>
            <person name="Caldwell B."/>
            <person name="Capuano V."/>
            <person name="Carter N.M."/>
            <person name="Choi S.-K."/>
            <person name="Codani J.-J."/>
            <person name="Connerton I.F."/>
            <person name="Cummings N.J."/>
            <person name="Daniel R.A."/>
            <person name="Denizot F."/>
            <person name="Devine K.M."/>
            <person name="Duesterhoeft A."/>
            <person name="Ehrlich S.D."/>
            <person name="Emmerson P.T."/>
            <person name="Entian K.-D."/>
            <person name="Errington J."/>
            <person name="Fabret C."/>
            <person name="Ferrari E."/>
            <person name="Foulger D."/>
            <person name="Fritz C."/>
            <person name="Fujita M."/>
            <person name="Fujita Y."/>
            <person name="Fuma S."/>
            <person name="Galizzi A."/>
            <person name="Galleron N."/>
            <person name="Ghim S.-Y."/>
            <person name="Glaser P."/>
            <person name="Goffeau A."/>
            <person name="Golightly E.J."/>
            <person name="Grandi G."/>
            <person name="Guiseppi G."/>
            <person name="Guy B.J."/>
            <person name="Haga K."/>
            <person name="Haiech J."/>
            <person name="Harwood C.R."/>
            <person name="Henaut A."/>
            <person name="Hilbert H."/>
            <person name="Holsappel S."/>
            <person name="Hosono S."/>
            <person name="Hullo M.-F."/>
            <person name="Itaya M."/>
            <person name="Jones L.-M."/>
            <person name="Joris B."/>
            <person name="Karamata D."/>
            <person name="Kasahara Y."/>
            <person name="Klaerr-Blanchard M."/>
            <person name="Klein C."/>
            <person name="Kobayashi Y."/>
            <person name="Koetter P."/>
            <person name="Koningstein G."/>
            <person name="Krogh S."/>
            <person name="Kumano M."/>
            <person name="Kurita K."/>
            <person name="Lapidus A."/>
            <person name="Lardinois S."/>
            <person name="Lauber J."/>
            <person name="Lazarevic V."/>
            <person name="Lee S.-M."/>
            <person name="Levine A."/>
            <person name="Liu H."/>
            <person name="Masuda S."/>
            <person name="Mauel C."/>
            <person name="Medigue C."/>
            <person name="Medina N."/>
            <person name="Mellado R.P."/>
            <person name="Mizuno M."/>
            <person name="Moestl D."/>
            <person name="Nakai S."/>
            <person name="Noback M."/>
            <person name="Noone D."/>
            <person name="O'Reilly M."/>
            <person name="Ogawa K."/>
            <person name="Ogiwara A."/>
            <person name="Oudega B."/>
            <person name="Park S.-H."/>
            <person name="Parro V."/>
            <person name="Pohl T.M."/>
            <person name="Portetelle D."/>
            <person name="Porwollik S."/>
            <person name="Prescott A.M."/>
            <person name="Presecan E."/>
            <person name="Pujic P."/>
            <person name="Purnelle B."/>
            <person name="Rapoport G."/>
            <person name="Rey M."/>
            <person name="Reynolds S."/>
            <person name="Rieger M."/>
            <person name="Rivolta C."/>
            <person name="Rocha E."/>
            <person name="Roche B."/>
            <person name="Rose M."/>
            <person name="Sadaie Y."/>
            <person name="Sato T."/>
            <person name="Scanlan E."/>
            <person name="Schleich S."/>
            <person name="Schroeter R."/>
            <person name="Scoffone F."/>
            <person name="Sekiguchi J."/>
            <person name="Sekowska A."/>
            <person name="Seror S.J."/>
            <person name="Serror P."/>
            <person name="Shin B.-S."/>
            <person name="Soldo B."/>
            <person name="Sorokin A."/>
            <person name="Tacconi E."/>
            <person name="Takagi T."/>
            <person name="Takahashi H."/>
            <person name="Takemaru K."/>
            <person name="Takeuchi M."/>
            <person name="Tamakoshi A."/>
            <person name="Tanaka T."/>
            <person name="Terpstra P."/>
            <person name="Tognoni A."/>
            <person name="Tosato V."/>
            <person name="Uchiyama S."/>
            <person name="Vandenbol M."/>
            <person name="Vannier F."/>
            <person name="Vassarotti A."/>
            <person name="Viari A."/>
            <person name="Wambutt R."/>
            <person name="Wedler E."/>
            <person name="Wedler H."/>
            <person name="Weitzenegger T."/>
            <person name="Winters P."/>
            <person name="Wipat A."/>
            <person name="Yamamoto H."/>
            <person name="Yamane K."/>
            <person name="Yasumoto K."/>
            <person name="Yata K."/>
            <person name="Yoshida K."/>
            <person name="Yoshikawa H.-F."/>
            <person name="Zumstein E."/>
            <person name="Yoshikawa H."/>
            <person name="Danchin A."/>
        </authorList>
    </citation>
    <scope>NUCLEOTIDE SEQUENCE [LARGE SCALE GENOMIC DNA]</scope>
    <source>
        <strain>168</strain>
    </source>
</reference>
<proteinExistence type="evidence at protein level"/>
<keyword id="KW-0961">Cell wall biogenesis/degradation</keyword>
<keyword id="KW-0178">Competence</keyword>
<keyword id="KW-0903">Direct protein sequencing</keyword>
<keyword id="KW-0378">Hydrolase</keyword>
<keyword id="KW-1185">Reference proteome</keyword>
<keyword id="KW-0749">Sporulation</keyword>
<dbReference type="EC" id="3.5.1.28"/>
<dbReference type="EMBL" id="X51424">
    <property type="protein sequence ID" value="CAA35788.1"/>
    <property type="molecule type" value="Genomic_DNA"/>
</dbReference>
<dbReference type="EMBL" id="M59232">
    <property type="protein sequence ID" value="AAA62676.1"/>
    <property type="molecule type" value="Genomic_DNA"/>
</dbReference>
<dbReference type="EMBL" id="D32216">
    <property type="protein sequence ID" value="BAA06960.1"/>
    <property type="molecule type" value="Genomic_DNA"/>
</dbReference>
<dbReference type="EMBL" id="D84432">
    <property type="protein sequence ID" value="BAA12424.1"/>
    <property type="molecule type" value="Genomic_DNA"/>
</dbReference>
<dbReference type="EMBL" id="AL009126">
    <property type="protein sequence ID" value="CAB14531.1"/>
    <property type="molecule type" value="Genomic_DNA"/>
</dbReference>
<dbReference type="PIR" id="S26671">
    <property type="entry name" value="C44816"/>
</dbReference>
<dbReference type="RefSeq" id="NP_390467.1">
    <property type="nucleotide sequence ID" value="NC_000964.3"/>
</dbReference>
<dbReference type="RefSeq" id="WP_003229946.1">
    <property type="nucleotide sequence ID" value="NZ_OZ025638.1"/>
</dbReference>
<dbReference type="SMR" id="P24808"/>
<dbReference type="FunCoup" id="P24808">
    <property type="interactions" value="18"/>
</dbReference>
<dbReference type="STRING" id="224308.BSU25900"/>
<dbReference type="PaxDb" id="224308-BSU25900"/>
<dbReference type="EnsemblBacteria" id="CAB14531">
    <property type="protein sequence ID" value="CAB14531"/>
    <property type="gene ID" value="BSU_25900"/>
</dbReference>
<dbReference type="GeneID" id="937772"/>
<dbReference type="KEGG" id="bsu:BSU25900"/>
<dbReference type="PATRIC" id="fig|224308.179.peg.2815"/>
<dbReference type="eggNOG" id="COG3409">
    <property type="taxonomic scope" value="Bacteria"/>
</dbReference>
<dbReference type="eggNOG" id="COG5632">
    <property type="taxonomic scope" value="Bacteria"/>
</dbReference>
<dbReference type="InParanoid" id="P24808"/>
<dbReference type="OrthoDB" id="9794294at2"/>
<dbReference type="PhylomeDB" id="P24808"/>
<dbReference type="BioCyc" id="BSUB:BSU25900-MONOMER"/>
<dbReference type="Proteomes" id="UP000001570">
    <property type="component" value="Chromosome"/>
</dbReference>
<dbReference type="GO" id="GO:0008745">
    <property type="term" value="F:N-acetylmuramoyl-L-alanine amidase activity"/>
    <property type="evidence" value="ECO:0000318"/>
    <property type="project" value="GO_Central"/>
</dbReference>
<dbReference type="GO" id="GO:0071555">
    <property type="term" value="P:cell wall organization"/>
    <property type="evidence" value="ECO:0007669"/>
    <property type="project" value="UniProtKB-KW"/>
</dbReference>
<dbReference type="GO" id="GO:0030420">
    <property type="term" value="P:establishment of competence for transformation"/>
    <property type="evidence" value="ECO:0007669"/>
    <property type="project" value="UniProtKB-KW"/>
</dbReference>
<dbReference type="GO" id="GO:0009253">
    <property type="term" value="P:peptidoglycan catabolic process"/>
    <property type="evidence" value="ECO:0000318"/>
    <property type="project" value="GO_Central"/>
</dbReference>
<dbReference type="GO" id="GO:0009254">
    <property type="term" value="P:peptidoglycan turnover"/>
    <property type="evidence" value="ECO:0000318"/>
    <property type="project" value="GO_Central"/>
</dbReference>
<dbReference type="GO" id="GO:0030435">
    <property type="term" value="P:sporulation resulting in formation of a cellular spore"/>
    <property type="evidence" value="ECO:0007669"/>
    <property type="project" value="UniProtKB-KW"/>
</dbReference>
<dbReference type="CDD" id="cd06583">
    <property type="entry name" value="PGRP"/>
    <property type="match status" value="1"/>
</dbReference>
<dbReference type="Gene3D" id="3.40.80.10">
    <property type="entry name" value="Peptidoglycan recognition protein-like"/>
    <property type="match status" value="1"/>
</dbReference>
<dbReference type="Gene3D" id="1.10.101.10">
    <property type="entry name" value="PGBD-like superfamily/PGBD"/>
    <property type="match status" value="1"/>
</dbReference>
<dbReference type="InterPro" id="IPR036505">
    <property type="entry name" value="Amidase/PGRP_sf"/>
</dbReference>
<dbReference type="InterPro" id="IPR002502">
    <property type="entry name" value="Amidase_domain"/>
</dbReference>
<dbReference type="InterPro" id="IPR051206">
    <property type="entry name" value="NAMLAA_amidase_2"/>
</dbReference>
<dbReference type="InterPro" id="IPR002477">
    <property type="entry name" value="Peptidoglycan-bd-like"/>
</dbReference>
<dbReference type="InterPro" id="IPR036365">
    <property type="entry name" value="PGBD-like_sf"/>
</dbReference>
<dbReference type="InterPro" id="IPR036366">
    <property type="entry name" value="PGBDSf"/>
</dbReference>
<dbReference type="PANTHER" id="PTHR30417">
    <property type="entry name" value="N-ACETYLMURAMOYL-L-ALANINE AMIDASE AMID"/>
    <property type="match status" value="1"/>
</dbReference>
<dbReference type="PANTHER" id="PTHR30417:SF11">
    <property type="entry name" value="N-ACETYLMURAMOYL-L-ALANINE AMIDASE XLYA"/>
    <property type="match status" value="1"/>
</dbReference>
<dbReference type="Pfam" id="PF01510">
    <property type="entry name" value="Amidase_2"/>
    <property type="match status" value="1"/>
</dbReference>
<dbReference type="Pfam" id="PF01471">
    <property type="entry name" value="PG_binding_1"/>
    <property type="match status" value="1"/>
</dbReference>
<dbReference type="SMART" id="SM00644">
    <property type="entry name" value="Ami_2"/>
    <property type="match status" value="1"/>
</dbReference>
<dbReference type="SUPFAM" id="SSF55846">
    <property type="entry name" value="N-acetylmuramoyl-L-alanine amidase-like"/>
    <property type="match status" value="1"/>
</dbReference>
<dbReference type="SUPFAM" id="SSF47090">
    <property type="entry name" value="PGBD-like"/>
    <property type="match status" value="1"/>
</dbReference>
<accession>P24808</accession>
<evidence type="ECO:0000255" key="1"/>
<evidence type="ECO:0000269" key="2">
    <source>
    </source>
</evidence>
<evidence type="ECO:0000305" key="3"/>
<name>CWLA_BACSU</name>
<sequence length="272" mass="29958">MAIKVVKNLVSKSKYGLKCPNPMKAEYITIHNTANDASAANEISYMKNNSSSTSFHFAVDDKQVIQGIPTNRNAWHTGDGTNGTGNRKSIGVEICYSKSGGVRYKAAEKLAIKFVAQLLKERGWGIDRVRKHQDWNGKYCPHRILSEGRWIQVKTAIEAELKKLGGKTNSSKASVAKKKTTNTSSKKTSYALPSGIFKVKSPMMRGEKVTQIQKALAALYFYPDKGAKNNGIDGVYGPKTADAIRRFQSMYGLTQDGIYGPKTKAKLEALLK</sequence>
<organism>
    <name type="scientific">Bacillus subtilis (strain 168)</name>
    <dbReference type="NCBI Taxonomy" id="224308"/>
    <lineage>
        <taxon>Bacteria</taxon>
        <taxon>Bacillati</taxon>
        <taxon>Bacillota</taxon>
        <taxon>Bacilli</taxon>
        <taxon>Bacillales</taxon>
        <taxon>Bacillaceae</taxon>
        <taxon>Bacillus</taxon>
    </lineage>
</organism>
<comment type="function">
    <text>Autolysins are involved in some important biological processes such as cell separation, cell-wall turnover, competence for genetic transformation, formation of the flagella and sporulation.</text>
</comment>
<comment type="catalytic activity">
    <reaction>
        <text>Hydrolyzes the link between N-acetylmuramoyl residues and L-amino acid residues in certain cell-wall glycopeptides.</text>
        <dbReference type="EC" id="3.5.1.28"/>
    </reaction>
</comment>
<comment type="similarity">
    <text evidence="3">Belongs to the N-acetylmuramoyl-L-alanine amidase 2 family.</text>
</comment>
<gene>
    <name type="primary">cwlA</name>
    <name type="ordered locus">BSU25900</name>
</gene>